<protein>
    <recommendedName>
        <fullName evidence="1">DNA-directed RNA polymerase subunit beta'</fullName>
        <shortName evidence="1">RNAP subunit beta'</shortName>
        <ecNumber evidence="1">2.7.7.6</ecNumber>
    </recommendedName>
    <alternativeName>
        <fullName evidence="1">RNA polymerase subunit beta'</fullName>
    </alternativeName>
    <alternativeName>
        <fullName evidence="1">Transcriptase subunit beta'</fullName>
    </alternativeName>
</protein>
<accession>B0SAG0</accession>
<feature type="chain" id="PRO_1000141777" description="DNA-directed RNA polymerase subunit beta'">
    <location>
        <begin position="1"/>
        <end position="1433"/>
    </location>
</feature>
<feature type="region of interest" description="Disordered" evidence="2">
    <location>
        <begin position="1383"/>
        <end position="1433"/>
    </location>
</feature>
<feature type="compositionally biased region" description="Acidic residues" evidence="2">
    <location>
        <begin position="1383"/>
        <end position="1393"/>
    </location>
</feature>
<feature type="compositionally biased region" description="Acidic residues" evidence="2">
    <location>
        <begin position="1411"/>
        <end position="1433"/>
    </location>
</feature>
<feature type="binding site" evidence="1">
    <location>
        <position position="60"/>
    </location>
    <ligand>
        <name>Zn(2+)</name>
        <dbReference type="ChEBI" id="CHEBI:29105"/>
        <label>1</label>
    </ligand>
</feature>
<feature type="binding site" evidence="1">
    <location>
        <position position="62"/>
    </location>
    <ligand>
        <name>Zn(2+)</name>
        <dbReference type="ChEBI" id="CHEBI:29105"/>
        <label>1</label>
    </ligand>
</feature>
<feature type="binding site" evidence="1">
    <location>
        <position position="75"/>
    </location>
    <ligand>
        <name>Zn(2+)</name>
        <dbReference type="ChEBI" id="CHEBI:29105"/>
        <label>1</label>
    </ligand>
</feature>
<feature type="binding site" evidence="1">
    <location>
        <position position="78"/>
    </location>
    <ligand>
        <name>Zn(2+)</name>
        <dbReference type="ChEBI" id="CHEBI:29105"/>
        <label>1</label>
    </ligand>
</feature>
<feature type="binding site" evidence="1">
    <location>
        <position position="449"/>
    </location>
    <ligand>
        <name>Mg(2+)</name>
        <dbReference type="ChEBI" id="CHEBI:18420"/>
    </ligand>
</feature>
<feature type="binding site" evidence="1">
    <location>
        <position position="451"/>
    </location>
    <ligand>
        <name>Mg(2+)</name>
        <dbReference type="ChEBI" id="CHEBI:18420"/>
    </ligand>
</feature>
<feature type="binding site" evidence="1">
    <location>
        <position position="453"/>
    </location>
    <ligand>
        <name>Mg(2+)</name>
        <dbReference type="ChEBI" id="CHEBI:18420"/>
    </ligand>
</feature>
<feature type="binding site" evidence="1">
    <location>
        <position position="777"/>
    </location>
    <ligand>
        <name>Zn(2+)</name>
        <dbReference type="ChEBI" id="CHEBI:29105"/>
        <label>2</label>
    </ligand>
</feature>
<feature type="binding site" evidence="1">
    <location>
        <position position="851"/>
    </location>
    <ligand>
        <name>Zn(2+)</name>
        <dbReference type="ChEBI" id="CHEBI:29105"/>
        <label>2</label>
    </ligand>
</feature>
<feature type="binding site" evidence="1">
    <location>
        <position position="858"/>
    </location>
    <ligand>
        <name>Zn(2+)</name>
        <dbReference type="ChEBI" id="CHEBI:29105"/>
        <label>2</label>
    </ligand>
</feature>
<feature type="binding site" evidence="1">
    <location>
        <position position="861"/>
    </location>
    <ligand>
        <name>Zn(2+)</name>
        <dbReference type="ChEBI" id="CHEBI:29105"/>
        <label>2</label>
    </ligand>
</feature>
<evidence type="ECO:0000255" key="1">
    <source>
        <dbReference type="HAMAP-Rule" id="MF_01322"/>
    </source>
</evidence>
<evidence type="ECO:0000256" key="2">
    <source>
        <dbReference type="SAM" id="MobiDB-lite"/>
    </source>
</evidence>
<name>RPOC_LEPBA</name>
<comment type="function">
    <text evidence="1">DNA-dependent RNA polymerase catalyzes the transcription of DNA into RNA using the four ribonucleoside triphosphates as substrates.</text>
</comment>
<comment type="catalytic activity">
    <reaction evidence="1">
        <text>RNA(n) + a ribonucleoside 5'-triphosphate = RNA(n+1) + diphosphate</text>
        <dbReference type="Rhea" id="RHEA:21248"/>
        <dbReference type="Rhea" id="RHEA-COMP:14527"/>
        <dbReference type="Rhea" id="RHEA-COMP:17342"/>
        <dbReference type="ChEBI" id="CHEBI:33019"/>
        <dbReference type="ChEBI" id="CHEBI:61557"/>
        <dbReference type="ChEBI" id="CHEBI:140395"/>
        <dbReference type="EC" id="2.7.7.6"/>
    </reaction>
</comment>
<comment type="cofactor">
    <cofactor evidence="1">
        <name>Mg(2+)</name>
        <dbReference type="ChEBI" id="CHEBI:18420"/>
    </cofactor>
    <text evidence="1">Binds 1 Mg(2+) ion per subunit.</text>
</comment>
<comment type="cofactor">
    <cofactor evidence="1">
        <name>Zn(2+)</name>
        <dbReference type="ChEBI" id="CHEBI:29105"/>
    </cofactor>
    <text evidence="1">Binds 2 Zn(2+) ions per subunit.</text>
</comment>
<comment type="subunit">
    <text evidence="1">The RNAP catalytic core consists of 2 alpha, 1 beta, 1 beta' and 1 omega subunit. When a sigma factor is associated with the core the holoenzyme is formed, which can initiate transcription.</text>
</comment>
<comment type="similarity">
    <text evidence="1">Belongs to the RNA polymerase beta' chain family.</text>
</comment>
<proteinExistence type="inferred from homology"/>
<organism>
    <name type="scientific">Leptospira biflexa serovar Patoc (strain Patoc 1 / Ames)</name>
    <dbReference type="NCBI Taxonomy" id="355278"/>
    <lineage>
        <taxon>Bacteria</taxon>
        <taxon>Pseudomonadati</taxon>
        <taxon>Spirochaetota</taxon>
        <taxon>Spirochaetia</taxon>
        <taxon>Leptospirales</taxon>
        <taxon>Leptospiraceae</taxon>
        <taxon>Leptospira</taxon>
    </lineage>
</organism>
<reference key="1">
    <citation type="journal article" date="2008" name="PLoS ONE">
        <title>Genome sequence of the saprophyte Leptospira biflexa provides insights into the evolution of Leptospira and the pathogenesis of leptospirosis.</title>
        <authorList>
            <person name="Picardeau M."/>
            <person name="Bulach D.M."/>
            <person name="Bouchier C."/>
            <person name="Zuerner R.L."/>
            <person name="Zidane N."/>
            <person name="Wilson P.J."/>
            <person name="Creno S."/>
            <person name="Kuczek E.S."/>
            <person name="Bommezzadri S."/>
            <person name="Davis J.C."/>
            <person name="McGrath A."/>
            <person name="Johnson M.J."/>
            <person name="Boursaux-Eude C."/>
            <person name="Seemann T."/>
            <person name="Rouy Z."/>
            <person name="Coppel R.L."/>
            <person name="Rood J.I."/>
            <person name="Lajus A."/>
            <person name="Davies J.K."/>
            <person name="Medigue C."/>
            <person name="Adler B."/>
        </authorList>
    </citation>
    <scope>NUCLEOTIDE SEQUENCE [LARGE SCALE GENOMIC DNA]</scope>
    <source>
        <strain>Patoc 1 / Ames</strain>
    </source>
</reference>
<gene>
    <name evidence="1" type="primary">rpoC</name>
    <name type="ordered locus">LBF_1919</name>
</gene>
<sequence length="1433" mass="160647">MRNYNSFESITIRLASPERIKEWSFGEVKKPETINYRTLKPERDGLFCEKIFGTTKDWECYCGKFKSIRYKGVVCDKCGVEVTHSKVRRERMGHIELAAPVSHIWYYRSVPSRMGLLLDMTINQLKSVLYFEKYVIIDPADSGRNRGELIDEDEYHNYLDEYGDKFIAGIGGDAIKELLARIDVDAEARVIRQKIQDKNKISDKRIFKRLEVLEAFRDSGNRPEWMVLDVVPVIPPELRPMVQLEGGRFATSDLNDLYRRVINRNNRLKRLLALKAPEIIVRNEKRMLQEAVGALFDNSRRKRTVKGKGNRPLKSISDMLKGKQGRFRQNLLGKRVDYSGRSVIVVGPELKYHQMGLPKKMALELFKPFIMKRLVDLELAPNIKSAKKKIEAEDKEVFDVLETVVKEHPVLLNRAPTLHRLGIQAFLPVLVEGKAIKLHPLVCHAFNADFDGDQMAIHVPLAPKAQLETWMLMLSPHNILNPANGQPICGPTQDIVLGIYYLTSEVKDAKGEGKFFTGLEEVMYAIETKTVEIRSKISVLHEGKIIETTPGRLIFNQVMPKGYVYINRTLGDKETNKIIADVYEKFGPGITVVMLDEIKRLGYRYATVFAPTISIDDIRVSPQKEGLVNDANKEVEKADMEYRKGIITNEERRKKVIEIWTKTNDRITEGMFKELEKDQAGFNPVYVMAASGARGSKQQIRQLAGMRGLMAKPSGEIIELAIRSNFREGLGVLEFFISTHGARKGLADTALKTADAGYLTRRLVDISQDVIVSEDDCGTKANITLGIVKEGENVIVSLADRVFGRYTAEDLVDPVTEKVVFPKDTLITRALGQQIENLGYDKIKVRSPLTCRSRHGICTKCYGMDMARLVPAEIGEAVGTIAAQSIGQPGTQLTMRTFHVGGAASATIQEKEHKVPFRSLVKSINGRLVTNANGSKVFARRGTIIVNRLIQEFNTESLSSVRIVDGQRLEKGEVFASQVGESIEQRITSDQAGTVSLIGTTLRILGDDIVIPVKIGTILKSEEGQIVEENKALAEFDPYNEVAVSETAGTIVWEDLEIGKNVRRDVDPKTSNIILKVVEQKKDRLVPKVIVGSDGYSVPVDALLQFQNGDKVREGDVIFKIPSVAEKTRDITGGLPRVDELFEARRPKDACTLAEIDGKIEDKGEIVKEKRILYILPDSPEQEKVKVAIPIGKQIRVRQGDFVKRGDQLDEGNFDPHDILAIKGPSALHEYLVSEVQEVYRLQGVHINDKHIEVVVRSMLRKVIITDSGDTSFVNQQQVDKFLFDEENDRVEQEGGSPAQGTPVLLGLTKASLNTESYFSAASFQETTKVLTDAAIKGKTDNLMGLKENVIIGHMIPAGTGMKKYRDIEVFKEMPGDLDWDLDSEEEEEELSELSEAAPVSTATLSKLVAEEDEDEDELEEEADDSDDEDDDD</sequence>
<dbReference type="EC" id="2.7.7.6" evidence="1"/>
<dbReference type="EMBL" id="CP000777">
    <property type="protein sequence ID" value="ABZ94423.1"/>
    <property type="molecule type" value="Genomic_DNA"/>
</dbReference>
<dbReference type="RefSeq" id="WP_012388944.1">
    <property type="nucleotide sequence ID" value="NC_010842.1"/>
</dbReference>
<dbReference type="SMR" id="B0SAG0"/>
<dbReference type="KEGG" id="lbf:LBF_1919"/>
<dbReference type="HOGENOM" id="CLU_000524_3_1_12"/>
<dbReference type="GO" id="GO:0000428">
    <property type="term" value="C:DNA-directed RNA polymerase complex"/>
    <property type="evidence" value="ECO:0007669"/>
    <property type="project" value="UniProtKB-KW"/>
</dbReference>
<dbReference type="GO" id="GO:0003677">
    <property type="term" value="F:DNA binding"/>
    <property type="evidence" value="ECO:0007669"/>
    <property type="project" value="UniProtKB-UniRule"/>
</dbReference>
<dbReference type="GO" id="GO:0003899">
    <property type="term" value="F:DNA-directed RNA polymerase activity"/>
    <property type="evidence" value="ECO:0007669"/>
    <property type="project" value="UniProtKB-UniRule"/>
</dbReference>
<dbReference type="GO" id="GO:0000287">
    <property type="term" value="F:magnesium ion binding"/>
    <property type="evidence" value="ECO:0007669"/>
    <property type="project" value="UniProtKB-UniRule"/>
</dbReference>
<dbReference type="GO" id="GO:0008270">
    <property type="term" value="F:zinc ion binding"/>
    <property type="evidence" value="ECO:0007669"/>
    <property type="project" value="UniProtKB-UniRule"/>
</dbReference>
<dbReference type="GO" id="GO:0006351">
    <property type="term" value="P:DNA-templated transcription"/>
    <property type="evidence" value="ECO:0007669"/>
    <property type="project" value="UniProtKB-UniRule"/>
</dbReference>
<dbReference type="CDD" id="cd02655">
    <property type="entry name" value="RNAP_beta'_C"/>
    <property type="match status" value="1"/>
</dbReference>
<dbReference type="CDD" id="cd01609">
    <property type="entry name" value="RNAP_beta'_N"/>
    <property type="match status" value="1"/>
</dbReference>
<dbReference type="FunFam" id="4.10.860.120:FF:000001">
    <property type="entry name" value="DNA-directed RNA polymerase subunit beta"/>
    <property type="match status" value="1"/>
</dbReference>
<dbReference type="Gene3D" id="1.10.132.30">
    <property type="match status" value="1"/>
</dbReference>
<dbReference type="Gene3D" id="1.10.150.390">
    <property type="match status" value="1"/>
</dbReference>
<dbReference type="Gene3D" id="1.10.1790.20">
    <property type="match status" value="1"/>
</dbReference>
<dbReference type="Gene3D" id="1.10.40.90">
    <property type="match status" value="1"/>
</dbReference>
<dbReference type="Gene3D" id="2.40.40.20">
    <property type="match status" value="1"/>
</dbReference>
<dbReference type="Gene3D" id="2.40.50.100">
    <property type="match status" value="2"/>
</dbReference>
<dbReference type="Gene3D" id="4.10.860.120">
    <property type="entry name" value="RNA polymerase II, clamp domain"/>
    <property type="match status" value="1"/>
</dbReference>
<dbReference type="Gene3D" id="1.10.274.100">
    <property type="entry name" value="RNA polymerase Rpb1, domain 3"/>
    <property type="match status" value="1"/>
</dbReference>
<dbReference type="HAMAP" id="MF_01322">
    <property type="entry name" value="RNApol_bact_RpoC"/>
    <property type="match status" value="1"/>
</dbReference>
<dbReference type="InterPro" id="IPR045867">
    <property type="entry name" value="DNA-dir_RpoC_beta_prime"/>
</dbReference>
<dbReference type="InterPro" id="IPR012754">
    <property type="entry name" value="DNA-dir_RpoC_beta_prime_bact"/>
</dbReference>
<dbReference type="InterPro" id="IPR000722">
    <property type="entry name" value="RNA_pol_asu"/>
</dbReference>
<dbReference type="InterPro" id="IPR006592">
    <property type="entry name" value="RNA_pol_N"/>
</dbReference>
<dbReference type="InterPro" id="IPR007080">
    <property type="entry name" value="RNA_pol_Rpb1_1"/>
</dbReference>
<dbReference type="InterPro" id="IPR007066">
    <property type="entry name" value="RNA_pol_Rpb1_3"/>
</dbReference>
<dbReference type="InterPro" id="IPR042102">
    <property type="entry name" value="RNA_pol_Rpb1_3_sf"/>
</dbReference>
<dbReference type="InterPro" id="IPR007083">
    <property type="entry name" value="RNA_pol_Rpb1_4"/>
</dbReference>
<dbReference type="InterPro" id="IPR007081">
    <property type="entry name" value="RNA_pol_Rpb1_5"/>
</dbReference>
<dbReference type="InterPro" id="IPR044893">
    <property type="entry name" value="RNA_pol_Rpb1_clamp_domain"/>
</dbReference>
<dbReference type="InterPro" id="IPR038120">
    <property type="entry name" value="Rpb1_funnel_sf"/>
</dbReference>
<dbReference type="NCBIfam" id="TIGR02386">
    <property type="entry name" value="rpoC_TIGR"/>
    <property type="match status" value="1"/>
</dbReference>
<dbReference type="PANTHER" id="PTHR19376">
    <property type="entry name" value="DNA-DIRECTED RNA POLYMERASE"/>
    <property type="match status" value="1"/>
</dbReference>
<dbReference type="PANTHER" id="PTHR19376:SF54">
    <property type="entry name" value="DNA-DIRECTED RNA POLYMERASE SUBUNIT BETA"/>
    <property type="match status" value="1"/>
</dbReference>
<dbReference type="Pfam" id="PF04997">
    <property type="entry name" value="RNA_pol_Rpb1_1"/>
    <property type="match status" value="1"/>
</dbReference>
<dbReference type="Pfam" id="PF00623">
    <property type="entry name" value="RNA_pol_Rpb1_2"/>
    <property type="match status" value="1"/>
</dbReference>
<dbReference type="Pfam" id="PF04983">
    <property type="entry name" value="RNA_pol_Rpb1_3"/>
    <property type="match status" value="1"/>
</dbReference>
<dbReference type="Pfam" id="PF05000">
    <property type="entry name" value="RNA_pol_Rpb1_4"/>
    <property type="match status" value="1"/>
</dbReference>
<dbReference type="Pfam" id="PF04998">
    <property type="entry name" value="RNA_pol_Rpb1_5"/>
    <property type="match status" value="1"/>
</dbReference>
<dbReference type="SMART" id="SM00663">
    <property type="entry name" value="RPOLA_N"/>
    <property type="match status" value="1"/>
</dbReference>
<dbReference type="SUPFAM" id="SSF64484">
    <property type="entry name" value="beta and beta-prime subunits of DNA dependent RNA-polymerase"/>
    <property type="match status" value="1"/>
</dbReference>
<keyword id="KW-0240">DNA-directed RNA polymerase</keyword>
<keyword id="KW-0460">Magnesium</keyword>
<keyword id="KW-0479">Metal-binding</keyword>
<keyword id="KW-0548">Nucleotidyltransferase</keyword>
<keyword id="KW-0804">Transcription</keyword>
<keyword id="KW-0808">Transferase</keyword>
<keyword id="KW-0862">Zinc</keyword>